<name>MSCL_MYCBO</name>
<sequence>MLKGFKEFLARGNIVDLAVAVVIGTAFTALVTKFTDSIITPLINRIGVNAQSDVGILRIGIGGGQTIDLNVLLSAAINFFLIAFAVYFLVVLPYNTLRKKGEVEQPGDTQVVLLTEIRDLLAQTNGDSPGRHGGRGTPSPTDGPRASTESQ</sequence>
<reference key="1">
    <citation type="journal article" date="2003" name="Proc. Natl. Acad. Sci. U.S.A.">
        <title>The complete genome sequence of Mycobacterium bovis.</title>
        <authorList>
            <person name="Garnier T."/>
            <person name="Eiglmeier K."/>
            <person name="Camus J.-C."/>
            <person name="Medina N."/>
            <person name="Mansoor H."/>
            <person name="Pryor M."/>
            <person name="Duthoy S."/>
            <person name="Grondin S."/>
            <person name="Lacroix C."/>
            <person name="Monsempe C."/>
            <person name="Simon S."/>
            <person name="Harris B."/>
            <person name="Atkin R."/>
            <person name="Doggett J."/>
            <person name="Mayes R."/>
            <person name="Keating L."/>
            <person name="Wheeler P.R."/>
            <person name="Parkhill J."/>
            <person name="Barrell B.G."/>
            <person name="Cole S.T."/>
            <person name="Gordon S.V."/>
            <person name="Hewinson R.G."/>
        </authorList>
    </citation>
    <scope>NUCLEOTIDE SEQUENCE [LARGE SCALE GENOMIC DNA]</scope>
    <source>
        <strain>ATCC BAA-935 / AF2122/97</strain>
    </source>
</reference>
<reference key="2">
    <citation type="journal article" date="2017" name="Genome Announc.">
        <title>Updated reference genome sequence and annotation of Mycobacterium bovis AF2122/97.</title>
        <authorList>
            <person name="Malone K.M."/>
            <person name="Farrell D."/>
            <person name="Stuber T.P."/>
            <person name="Schubert O.T."/>
            <person name="Aebersold R."/>
            <person name="Robbe-Austerman S."/>
            <person name="Gordon S.V."/>
        </authorList>
    </citation>
    <scope>NUCLEOTIDE SEQUENCE [LARGE SCALE GENOMIC DNA]</scope>
    <scope>GENOME REANNOTATION</scope>
    <source>
        <strain>ATCC BAA-935 / AF2122/97</strain>
    </source>
</reference>
<keyword id="KW-1003">Cell membrane</keyword>
<keyword id="KW-0407">Ion channel</keyword>
<keyword id="KW-0406">Ion transport</keyword>
<keyword id="KW-0472">Membrane</keyword>
<keyword id="KW-1185">Reference proteome</keyword>
<keyword id="KW-0812">Transmembrane</keyword>
<keyword id="KW-1133">Transmembrane helix</keyword>
<keyword id="KW-0813">Transport</keyword>
<accession>P0A5K9</accession>
<accession>A0A1R3XX10</accession>
<accession>O53898</accession>
<accession>X2BGR4</accession>
<evidence type="ECO:0000255" key="1">
    <source>
        <dbReference type="HAMAP-Rule" id="MF_00115"/>
    </source>
</evidence>
<evidence type="ECO:0000256" key="2">
    <source>
        <dbReference type="SAM" id="MobiDB-lite"/>
    </source>
</evidence>
<evidence type="ECO:0000305" key="3"/>
<dbReference type="EMBL" id="LT708304">
    <property type="protein sequence ID" value="SIT99610.1"/>
    <property type="molecule type" value="Genomic_DNA"/>
</dbReference>
<dbReference type="RefSeq" id="NP_854668.1">
    <property type="nucleotide sequence ID" value="NC_002945.3"/>
</dbReference>
<dbReference type="RefSeq" id="WP_003405128.1">
    <property type="nucleotide sequence ID" value="NC_002945.4"/>
</dbReference>
<dbReference type="SMR" id="P0A5K9"/>
<dbReference type="KEGG" id="mbo:BQ2027_MB1011C"/>
<dbReference type="PATRIC" id="fig|233413.5.peg.1100"/>
<dbReference type="Proteomes" id="UP000001419">
    <property type="component" value="Chromosome"/>
</dbReference>
<dbReference type="GO" id="GO:0005886">
    <property type="term" value="C:plasma membrane"/>
    <property type="evidence" value="ECO:0007669"/>
    <property type="project" value="UniProtKB-SubCell"/>
</dbReference>
<dbReference type="GO" id="GO:0008381">
    <property type="term" value="F:mechanosensitive monoatomic ion channel activity"/>
    <property type="evidence" value="ECO:0007669"/>
    <property type="project" value="UniProtKB-UniRule"/>
</dbReference>
<dbReference type="FunFam" id="1.10.1200.120:FF:000006">
    <property type="entry name" value="Large-conductance mechanosensitive channel"/>
    <property type="match status" value="1"/>
</dbReference>
<dbReference type="Gene3D" id="1.20.5.220">
    <property type="match status" value="1"/>
</dbReference>
<dbReference type="Gene3D" id="1.10.1200.120">
    <property type="entry name" value="Large-conductance mechanosensitive channel, MscL, domain 1"/>
    <property type="match status" value="1"/>
</dbReference>
<dbReference type="HAMAP" id="MF_00115">
    <property type="entry name" value="MscL"/>
    <property type="match status" value="1"/>
</dbReference>
<dbReference type="InterPro" id="IPR019823">
    <property type="entry name" value="Mechanosensitive_channel_CS"/>
</dbReference>
<dbReference type="InterPro" id="IPR001185">
    <property type="entry name" value="MS_channel"/>
</dbReference>
<dbReference type="InterPro" id="IPR037673">
    <property type="entry name" value="MSC/AndL"/>
</dbReference>
<dbReference type="InterPro" id="IPR036019">
    <property type="entry name" value="MscL_channel"/>
</dbReference>
<dbReference type="NCBIfam" id="TIGR00220">
    <property type="entry name" value="mscL"/>
    <property type="match status" value="1"/>
</dbReference>
<dbReference type="NCBIfam" id="NF001842">
    <property type="entry name" value="PRK00567.1-3"/>
    <property type="match status" value="1"/>
</dbReference>
<dbReference type="PANTHER" id="PTHR30266:SF2">
    <property type="entry name" value="LARGE-CONDUCTANCE MECHANOSENSITIVE CHANNEL"/>
    <property type="match status" value="1"/>
</dbReference>
<dbReference type="PANTHER" id="PTHR30266">
    <property type="entry name" value="MECHANOSENSITIVE CHANNEL MSCL"/>
    <property type="match status" value="1"/>
</dbReference>
<dbReference type="Pfam" id="PF01741">
    <property type="entry name" value="MscL"/>
    <property type="match status" value="1"/>
</dbReference>
<dbReference type="PRINTS" id="PR01264">
    <property type="entry name" value="MECHCHANNEL"/>
</dbReference>
<dbReference type="SUPFAM" id="SSF81330">
    <property type="entry name" value="Gated mechanosensitive channel"/>
    <property type="match status" value="1"/>
</dbReference>
<dbReference type="PROSITE" id="PS01327">
    <property type="entry name" value="MSCL"/>
    <property type="match status" value="1"/>
</dbReference>
<feature type="chain" id="PRO_0000192450" description="Large-conductance mechanosensitive channel">
    <location>
        <begin position="1"/>
        <end position="151"/>
    </location>
</feature>
<feature type="transmembrane region" description="Helical" evidence="1">
    <location>
        <begin position="12"/>
        <end position="32"/>
    </location>
</feature>
<feature type="transmembrane region" description="Helical" evidence="1">
    <location>
        <begin position="71"/>
        <end position="91"/>
    </location>
</feature>
<feature type="region of interest" description="Disordered" evidence="2">
    <location>
        <begin position="122"/>
        <end position="151"/>
    </location>
</feature>
<protein>
    <recommendedName>
        <fullName evidence="1">Large-conductance mechanosensitive channel</fullName>
    </recommendedName>
</protein>
<comment type="function">
    <text evidence="1">Channel that opens in response to stretch forces in the membrane lipid bilayer. May participate in the regulation of osmotic pressure changes within the cell.</text>
</comment>
<comment type="subunit">
    <text evidence="1">Homopentamer.</text>
</comment>
<comment type="subcellular location">
    <subcellularLocation>
        <location evidence="1">Cell membrane</location>
        <topology evidence="1">Multi-pass membrane protein</topology>
    </subcellularLocation>
</comment>
<comment type="similarity">
    <text evidence="1 3">Belongs to the MscL family.</text>
</comment>
<organism>
    <name type="scientific">Mycobacterium bovis (strain ATCC BAA-935 / AF2122/97)</name>
    <dbReference type="NCBI Taxonomy" id="233413"/>
    <lineage>
        <taxon>Bacteria</taxon>
        <taxon>Bacillati</taxon>
        <taxon>Actinomycetota</taxon>
        <taxon>Actinomycetes</taxon>
        <taxon>Mycobacteriales</taxon>
        <taxon>Mycobacteriaceae</taxon>
        <taxon>Mycobacterium</taxon>
        <taxon>Mycobacterium tuberculosis complex</taxon>
    </lineage>
</organism>
<proteinExistence type="inferred from homology"/>
<gene>
    <name evidence="1" type="primary">mscL</name>
    <name type="ordered locus">BQ2027_MB1011C</name>
</gene>